<keyword id="KW-0010">Activator</keyword>
<keyword id="KW-0186">Copper</keyword>
<keyword id="KW-0963">Cytoplasm</keyword>
<keyword id="KW-0238">DNA-binding</keyword>
<keyword id="KW-0479">Metal-binding</keyword>
<keyword id="KW-1185">Reference proteome</keyword>
<keyword id="KW-0804">Transcription</keyword>
<keyword id="KW-0805">Transcription regulation</keyword>
<proteinExistence type="inferred from homology"/>
<sequence>MNISDVAKKTGLTSKAIRFYEEKKLVTPPVRTDNGYRSYTAKHIEELTLLRQARQVGFTLDECRELLALFHNPARHSADVKAATLLKVAEIEQHINDLNQMRMRLLALAEECPGDEGADCPIINSLAGCCHSSSSLPLK</sequence>
<organism>
    <name type="scientific">Yersinia pestis</name>
    <dbReference type="NCBI Taxonomy" id="632"/>
    <lineage>
        <taxon>Bacteria</taxon>
        <taxon>Pseudomonadati</taxon>
        <taxon>Pseudomonadota</taxon>
        <taxon>Gammaproteobacteria</taxon>
        <taxon>Enterobacterales</taxon>
        <taxon>Yersiniaceae</taxon>
        <taxon>Yersinia</taxon>
    </lineage>
</organism>
<name>CUER_YERPE</name>
<feature type="chain" id="PRO_0000098118" description="HTH-type transcriptional regulator CueR">
    <location>
        <begin position="1"/>
        <end position="139"/>
    </location>
</feature>
<feature type="domain" description="HTH merR-type" evidence="2">
    <location>
        <begin position="1"/>
        <end position="69"/>
    </location>
</feature>
<feature type="DNA-binding region" description="H-T-H motif" evidence="2">
    <location>
        <begin position="4"/>
        <end position="23"/>
    </location>
</feature>
<feature type="binding site" evidence="1">
    <location>
        <position position="112"/>
    </location>
    <ligand>
        <name>Cu(+)</name>
        <dbReference type="ChEBI" id="CHEBI:49552"/>
    </ligand>
</feature>
<feature type="binding site" evidence="1">
    <location>
        <position position="120"/>
    </location>
    <ligand>
        <name>Cu(+)</name>
        <dbReference type="ChEBI" id="CHEBI:49552"/>
    </ligand>
</feature>
<accession>Q8ZCA8</accession>
<accession>Q0WCI3</accession>
<dbReference type="EMBL" id="AL590842">
    <property type="protein sequence ID" value="CAL21687.1"/>
    <property type="molecule type" value="Genomic_DNA"/>
</dbReference>
<dbReference type="EMBL" id="AE009952">
    <property type="protein sequence ID" value="AAM84672.1"/>
    <property type="molecule type" value="Genomic_DNA"/>
</dbReference>
<dbReference type="EMBL" id="AE017042">
    <property type="protein sequence ID" value="AAS61098.1"/>
    <property type="molecule type" value="Genomic_DNA"/>
</dbReference>
<dbReference type="PIR" id="AD0375">
    <property type="entry name" value="AD0375"/>
</dbReference>
<dbReference type="RefSeq" id="WP_002208578.1">
    <property type="nucleotide sequence ID" value="NZ_WUCM01000009.1"/>
</dbReference>
<dbReference type="RefSeq" id="YP_002348005.1">
    <property type="nucleotide sequence ID" value="NC_003143.1"/>
</dbReference>
<dbReference type="SMR" id="Q8ZCA8"/>
<dbReference type="STRING" id="214092.YPO3085"/>
<dbReference type="PaxDb" id="214092-YPO3085"/>
<dbReference type="DNASU" id="1146041"/>
<dbReference type="EnsemblBacteria" id="AAS61098">
    <property type="protein sequence ID" value="AAS61098"/>
    <property type="gene ID" value="YP_0839"/>
</dbReference>
<dbReference type="GeneID" id="57975619"/>
<dbReference type="KEGG" id="ype:YPO3085"/>
<dbReference type="KEGG" id="ypk:y1094"/>
<dbReference type="KEGG" id="ypm:YP_0839"/>
<dbReference type="PATRIC" id="fig|1028802.3.peg.327"/>
<dbReference type="eggNOG" id="COG0789">
    <property type="taxonomic scope" value="Bacteria"/>
</dbReference>
<dbReference type="HOGENOM" id="CLU_060077_2_0_6"/>
<dbReference type="OMA" id="DAGSECC"/>
<dbReference type="OrthoDB" id="9808480at2"/>
<dbReference type="Proteomes" id="UP000000815">
    <property type="component" value="Chromosome"/>
</dbReference>
<dbReference type="Proteomes" id="UP000001019">
    <property type="component" value="Chromosome"/>
</dbReference>
<dbReference type="Proteomes" id="UP000002490">
    <property type="component" value="Chromosome"/>
</dbReference>
<dbReference type="GO" id="GO:0005737">
    <property type="term" value="C:cytoplasm"/>
    <property type="evidence" value="ECO:0007669"/>
    <property type="project" value="UniProtKB-SubCell"/>
</dbReference>
<dbReference type="GO" id="GO:0005507">
    <property type="term" value="F:copper ion binding"/>
    <property type="evidence" value="ECO:0007669"/>
    <property type="project" value="InterPro"/>
</dbReference>
<dbReference type="GO" id="GO:0003677">
    <property type="term" value="F:DNA binding"/>
    <property type="evidence" value="ECO:0007669"/>
    <property type="project" value="UniProtKB-KW"/>
</dbReference>
<dbReference type="GO" id="GO:0003700">
    <property type="term" value="F:DNA-binding transcription factor activity"/>
    <property type="evidence" value="ECO:0000318"/>
    <property type="project" value="GO_Central"/>
</dbReference>
<dbReference type="GO" id="GO:0045893">
    <property type="term" value="P:positive regulation of DNA-templated transcription"/>
    <property type="evidence" value="ECO:0000318"/>
    <property type="project" value="GO_Central"/>
</dbReference>
<dbReference type="CDD" id="cd01108">
    <property type="entry name" value="HTH_CueR"/>
    <property type="match status" value="1"/>
</dbReference>
<dbReference type="Gene3D" id="1.10.1660.10">
    <property type="match status" value="1"/>
</dbReference>
<dbReference type="InterPro" id="IPR011789">
    <property type="entry name" value="CueR"/>
</dbReference>
<dbReference type="InterPro" id="IPR009061">
    <property type="entry name" value="DNA-bd_dom_put_sf"/>
</dbReference>
<dbReference type="InterPro" id="IPR000551">
    <property type="entry name" value="MerR-type_HTH_dom"/>
</dbReference>
<dbReference type="InterPro" id="IPR047057">
    <property type="entry name" value="MerR_fam"/>
</dbReference>
<dbReference type="NCBIfam" id="TIGR02044">
    <property type="entry name" value="CueR"/>
    <property type="match status" value="1"/>
</dbReference>
<dbReference type="PANTHER" id="PTHR30204:SF16">
    <property type="entry name" value="HTH-TYPE TRANSCRIPTIONAL REGULATOR CUER"/>
    <property type="match status" value="1"/>
</dbReference>
<dbReference type="PANTHER" id="PTHR30204">
    <property type="entry name" value="REDOX-CYCLING DRUG-SENSING TRANSCRIPTIONAL ACTIVATOR SOXR"/>
    <property type="match status" value="1"/>
</dbReference>
<dbReference type="Pfam" id="PF13411">
    <property type="entry name" value="MerR_1"/>
    <property type="match status" value="1"/>
</dbReference>
<dbReference type="PRINTS" id="PR00040">
    <property type="entry name" value="HTHMERR"/>
</dbReference>
<dbReference type="SMART" id="SM00422">
    <property type="entry name" value="HTH_MERR"/>
    <property type="match status" value="1"/>
</dbReference>
<dbReference type="SUPFAM" id="SSF46955">
    <property type="entry name" value="Putative DNA-binding domain"/>
    <property type="match status" value="1"/>
</dbReference>
<dbReference type="PROSITE" id="PS50937">
    <property type="entry name" value="HTH_MERR_2"/>
    <property type="match status" value="1"/>
</dbReference>
<reference key="1">
    <citation type="journal article" date="2001" name="Nature">
        <title>Genome sequence of Yersinia pestis, the causative agent of plague.</title>
        <authorList>
            <person name="Parkhill J."/>
            <person name="Wren B.W."/>
            <person name="Thomson N.R."/>
            <person name="Titball R.W."/>
            <person name="Holden M.T.G."/>
            <person name="Prentice M.B."/>
            <person name="Sebaihia M."/>
            <person name="James K.D."/>
            <person name="Churcher C.M."/>
            <person name="Mungall K.L."/>
            <person name="Baker S."/>
            <person name="Basham D."/>
            <person name="Bentley S.D."/>
            <person name="Brooks K."/>
            <person name="Cerdeno-Tarraga A.-M."/>
            <person name="Chillingworth T."/>
            <person name="Cronin A."/>
            <person name="Davies R.M."/>
            <person name="Davis P."/>
            <person name="Dougan G."/>
            <person name="Feltwell T."/>
            <person name="Hamlin N."/>
            <person name="Holroyd S."/>
            <person name="Jagels K."/>
            <person name="Karlyshev A.V."/>
            <person name="Leather S."/>
            <person name="Moule S."/>
            <person name="Oyston P.C.F."/>
            <person name="Quail M.A."/>
            <person name="Rutherford K.M."/>
            <person name="Simmonds M."/>
            <person name="Skelton J."/>
            <person name="Stevens K."/>
            <person name="Whitehead S."/>
            <person name="Barrell B.G."/>
        </authorList>
    </citation>
    <scope>NUCLEOTIDE SEQUENCE [LARGE SCALE GENOMIC DNA]</scope>
    <source>
        <strain>CO-92 / Biovar Orientalis</strain>
    </source>
</reference>
<reference key="2">
    <citation type="journal article" date="2002" name="J. Bacteriol.">
        <title>Genome sequence of Yersinia pestis KIM.</title>
        <authorList>
            <person name="Deng W."/>
            <person name="Burland V."/>
            <person name="Plunkett G. III"/>
            <person name="Boutin A."/>
            <person name="Mayhew G.F."/>
            <person name="Liss P."/>
            <person name="Perna N.T."/>
            <person name="Rose D.J."/>
            <person name="Mau B."/>
            <person name="Zhou S."/>
            <person name="Schwartz D.C."/>
            <person name="Fetherston J.D."/>
            <person name="Lindler L.E."/>
            <person name="Brubaker R.R."/>
            <person name="Plano G.V."/>
            <person name="Straley S.C."/>
            <person name="McDonough K.A."/>
            <person name="Nilles M.L."/>
            <person name="Matson J.S."/>
            <person name="Blattner F.R."/>
            <person name="Perry R.D."/>
        </authorList>
    </citation>
    <scope>NUCLEOTIDE SEQUENCE [LARGE SCALE GENOMIC DNA]</scope>
    <source>
        <strain>KIM10+ / Biovar Mediaevalis</strain>
    </source>
</reference>
<reference key="3">
    <citation type="journal article" date="2004" name="DNA Res.">
        <title>Complete genome sequence of Yersinia pestis strain 91001, an isolate avirulent to humans.</title>
        <authorList>
            <person name="Song Y."/>
            <person name="Tong Z."/>
            <person name="Wang J."/>
            <person name="Wang L."/>
            <person name="Guo Z."/>
            <person name="Han Y."/>
            <person name="Zhang J."/>
            <person name="Pei D."/>
            <person name="Zhou D."/>
            <person name="Qin H."/>
            <person name="Pang X."/>
            <person name="Han Y."/>
            <person name="Zhai J."/>
            <person name="Li M."/>
            <person name="Cui B."/>
            <person name="Qi Z."/>
            <person name="Jin L."/>
            <person name="Dai R."/>
            <person name="Chen F."/>
            <person name="Li S."/>
            <person name="Ye C."/>
            <person name="Du Z."/>
            <person name="Lin W."/>
            <person name="Wang J."/>
            <person name="Yu J."/>
            <person name="Yang H."/>
            <person name="Wang J."/>
            <person name="Huang P."/>
            <person name="Yang R."/>
        </authorList>
    </citation>
    <scope>NUCLEOTIDE SEQUENCE [LARGE SCALE GENOMIC DNA]</scope>
    <source>
        <strain>91001 / Biovar Mediaevalis</strain>
    </source>
</reference>
<comment type="function">
    <text evidence="1">Regulates the transcription of the copA and cueO genes. It detects cytoplasmic copper stress and activates transcription in response to increasing copper concentrations (By similarity).</text>
</comment>
<comment type="subunit">
    <text evidence="1">Homodimer.</text>
</comment>
<comment type="subcellular location">
    <subcellularLocation>
        <location evidence="3">Cytoplasm</location>
    </subcellularLocation>
</comment>
<comment type="domain">
    <text evidence="1">It contains a N-terminal DNA binding region and a C-terminal metal binding region.</text>
</comment>
<gene>
    <name type="primary">cueR</name>
    <name type="ordered locus">YPO3085</name>
    <name type="ordered locus">y1094</name>
    <name type="ordered locus">YP_0839</name>
</gene>
<protein>
    <recommendedName>
        <fullName>HTH-type transcriptional regulator CueR</fullName>
    </recommendedName>
    <alternativeName>
        <fullName>Copper efflux regulator</fullName>
    </alternativeName>
    <alternativeName>
        <fullName>Copper export regulator</fullName>
    </alternativeName>
</protein>
<evidence type="ECO:0000250" key="1"/>
<evidence type="ECO:0000255" key="2">
    <source>
        <dbReference type="PROSITE-ProRule" id="PRU00254"/>
    </source>
</evidence>
<evidence type="ECO:0000305" key="3"/>